<proteinExistence type="inferred from homology"/>
<comment type="function">
    <text evidence="1">Catalyzes the reversible formation of acyl-phosphate (acyl-PO(4)) from acyl-[acyl-carrier-protein] (acyl-ACP). This enzyme utilizes acyl-ACP as fatty acyl donor, but not acyl-CoA.</text>
</comment>
<comment type="catalytic activity">
    <reaction evidence="1">
        <text>a fatty acyl-[ACP] + phosphate = an acyl phosphate + holo-[ACP]</text>
        <dbReference type="Rhea" id="RHEA:42292"/>
        <dbReference type="Rhea" id="RHEA-COMP:9685"/>
        <dbReference type="Rhea" id="RHEA-COMP:14125"/>
        <dbReference type="ChEBI" id="CHEBI:43474"/>
        <dbReference type="ChEBI" id="CHEBI:59918"/>
        <dbReference type="ChEBI" id="CHEBI:64479"/>
        <dbReference type="ChEBI" id="CHEBI:138651"/>
        <dbReference type="EC" id="2.3.1.274"/>
    </reaction>
</comment>
<comment type="pathway">
    <text evidence="1">Lipid metabolism; phospholipid metabolism.</text>
</comment>
<comment type="subunit">
    <text evidence="1">Homodimer. Probably interacts with PlsY.</text>
</comment>
<comment type="subcellular location">
    <subcellularLocation>
        <location evidence="1">Cytoplasm</location>
    </subcellularLocation>
    <text evidence="1">Associated with the membrane possibly through PlsY.</text>
</comment>
<comment type="similarity">
    <text evidence="1">Belongs to the PlsX family.</text>
</comment>
<gene>
    <name evidence="1" type="primary">plsX</name>
    <name type="ordered locus">SaurJH1_1313</name>
</gene>
<keyword id="KW-0963">Cytoplasm</keyword>
<keyword id="KW-0444">Lipid biosynthesis</keyword>
<keyword id="KW-0443">Lipid metabolism</keyword>
<keyword id="KW-0594">Phospholipid biosynthesis</keyword>
<keyword id="KW-1208">Phospholipid metabolism</keyword>
<keyword id="KW-0808">Transferase</keyword>
<accession>A6U148</accession>
<organism>
    <name type="scientific">Staphylococcus aureus (strain JH1)</name>
    <dbReference type="NCBI Taxonomy" id="359787"/>
    <lineage>
        <taxon>Bacteria</taxon>
        <taxon>Bacillati</taxon>
        <taxon>Bacillota</taxon>
        <taxon>Bacilli</taxon>
        <taxon>Bacillales</taxon>
        <taxon>Staphylococcaceae</taxon>
        <taxon>Staphylococcus</taxon>
    </lineage>
</organism>
<reference key="1">
    <citation type="submission" date="2007-06" db="EMBL/GenBank/DDBJ databases">
        <title>Complete sequence of chromosome of Staphylococcus aureus subsp. aureus JH1.</title>
        <authorList>
            <consortium name="US DOE Joint Genome Institute"/>
            <person name="Copeland A."/>
            <person name="Lucas S."/>
            <person name="Lapidus A."/>
            <person name="Barry K."/>
            <person name="Detter J.C."/>
            <person name="Glavina del Rio T."/>
            <person name="Hammon N."/>
            <person name="Israni S."/>
            <person name="Dalin E."/>
            <person name="Tice H."/>
            <person name="Pitluck S."/>
            <person name="Chain P."/>
            <person name="Malfatti S."/>
            <person name="Shin M."/>
            <person name="Vergez L."/>
            <person name="Schmutz J."/>
            <person name="Larimer F."/>
            <person name="Land M."/>
            <person name="Hauser L."/>
            <person name="Kyrpides N."/>
            <person name="Ivanova N."/>
            <person name="Tomasz A."/>
            <person name="Richardson P."/>
        </authorList>
    </citation>
    <scope>NUCLEOTIDE SEQUENCE [LARGE SCALE GENOMIC DNA]</scope>
    <source>
        <strain>JH1</strain>
    </source>
</reference>
<protein>
    <recommendedName>
        <fullName evidence="1">Phosphate acyltransferase</fullName>
        <ecNumber evidence="1">2.3.1.274</ecNumber>
    </recommendedName>
    <alternativeName>
        <fullName evidence="1">Acyl-ACP phosphotransacylase</fullName>
    </alternativeName>
    <alternativeName>
        <fullName evidence="1">Acyl-[acyl-carrier-protein]--phosphate acyltransferase</fullName>
    </alternativeName>
    <alternativeName>
        <fullName evidence="1">Phosphate-acyl-ACP acyltransferase</fullName>
    </alternativeName>
</protein>
<feature type="chain" id="PRO_1000074175" description="Phosphate acyltransferase">
    <location>
        <begin position="1"/>
        <end position="328"/>
    </location>
</feature>
<sequence>MVKLAIDMMGGDNAPDIVLEAVQKAVEDFKNLEIMLFGDEKKYNLNHERIEFRHCSEKIEMEDEPVRAIKRKKDSSMVKMAEAVKSGEADGCVSAGNTGALMSVGLFIVGRIKGVARPALVVTLPTIDGKGFVFLDVGANADAKPEHLLQYAQLGDIYAQKIRGIDNPKISLLNIGTEPAKGNSLTKKSFELLNQDHSLNFVGNIEAKTLMDGDTDVVVTDGYTGNMVLKNLEGTAKSIGKMLKDTIMSSTKNKLAGAILKKDLAEFAKKMDYSEYGGSVLLGLEGTVVKAHGSSNAKAFYSAIRQAKIAGEQNIVQTMKETVGESNE</sequence>
<evidence type="ECO:0000255" key="1">
    <source>
        <dbReference type="HAMAP-Rule" id="MF_00019"/>
    </source>
</evidence>
<name>PLSX_STAA2</name>
<dbReference type="EC" id="2.3.1.274" evidence="1"/>
<dbReference type="EMBL" id="CP000736">
    <property type="protein sequence ID" value="ABR52166.1"/>
    <property type="molecule type" value="Genomic_DNA"/>
</dbReference>
<dbReference type="SMR" id="A6U148"/>
<dbReference type="KEGG" id="sah:SaurJH1_1313"/>
<dbReference type="HOGENOM" id="CLU_039379_1_1_9"/>
<dbReference type="UniPathway" id="UPA00085"/>
<dbReference type="GO" id="GO:0005737">
    <property type="term" value="C:cytoplasm"/>
    <property type="evidence" value="ECO:0007669"/>
    <property type="project" value="UniProtKB-SubCell"/>
</dbReference>
<dbReference type="GO" id="GO:0043811">
    <property type="term" value="F:phosphate:acyl-[acyl carrier protein] acyltransferase activity"/>
    <property type="evidence" value="ECO:0007669"/>
    <property type="project" value="UniProtKB-UniRule"/>
</dbReference>
<dbReference type="GO" id="GO:0006633">
    <property type="term" value="P:fatty acid biosynthetic process"/>
    <property type="evidence" value="ECO:0007669"/>
    <property type="project" value="UniProtKB-UniRule"/>
</dbReference>
<dbReference type="GO" id="GO:0008654">
    <property type="term" value="P:phospholipid biosynthetic process"/>
    <property type="evidence" value="ECO:0007669"/>
    <property type="project" value="UniProtKB-KW"/>
</dbReference>
<dbReference type="Gene3D" id="3.40.718.10">
    <property type="entry name" value="Isopropylmalate Dehydrogenase"/>
    <property type="match status" value="1"/>
</dbReference>
<dbReference type="HAMAP" id="MF_00019">
    <property type="entry name" value="PlsX"/>
    <property type="match status" value="1"/>
</dbReference>
<dbReference type="InterPro" id="IPR003664">
    <property type="entry name" value="FA_synthesis"/>
</dbReference>
<dbReference type="InterPro" id="IPR012281">
    <property type="entry name" value="Phospholipid_synth_PlsX-like"/>
</dbReference>
<dbReference type="NCBIfam" id="TIGR00182">
    <property type="entry name" value="plsX"/>
    <property type="match status" value="1"/>
</dbReference>
<dbReference type="PANTHER" id="PTHR30100">
    <property type="entry name" value="FATTY ACID/PHOSPHOLIPID SYNTHESIS PROTEIN PLSX"/>
    <property type="match status" value="1"/>
</dbReference>
<dbReference type="PANTHER" id="PTHR30100:SF1">
    <property type="entry name" value="PHOSPHATE ACYLTRANSFERASE"/>
    <property type="match status" value="1"/>
</dbReference>
<dbReference type="Pfam" id="PF02504">
    <property type="entry name" value="FA_synthesis"/>
    <property type="match status" value="1"/>
</dbReference>
<dbReference type="PIRSF" id="PIRSF002465">
    <property type="entry name" value="Phsphlp_syn_PlsX"/>
    <property type="match status" value="1"/>
</dbReference>
<dbReference type="SUPFAM" id="SSF53659">
    <property type="entry name" value="Isocitrate/Isopropylmalate dehydrogenase-like"/>
    <property type="match status" value="1"/>
</dbReference>